<proteinExistence type="inferred from homology"/>
<name>RS19_ROSCS</name>
<keyword id="KW-1185">Reference proteome</keyword>
<keyword id="KW-0687">Ribonucleoprotein</keyword>
<keyword id="KW-0689">Ribosomal protein</keyword>
<keyword id="KW-0694">RNA-binding</keyword>
<keyword id="KW-0699">rRNA-binding</keyword>
<feature type="chain" id="PRO_1000081788" description="Small ribosomal subunit protein uS19">
    <location>
        <begin position="1"/>
        <end position="95"/>
    </location>
</feature>
<protein>
    <recommendedName>
        <fullName evidence="1">Small ribosomal subunit protein uS19</fullName>
    </recommendedName>
    <alternativeName>
        <fullName evidence="2">30S ribosomal protein S19</fullName>
    </alternativeName>
</protein>
<sequence>MSRSSKKGPYVDVRLLGRIEELNRANEKRVLRTWSRDSTIFPQMVGHTIAVHDGRRHVPVYITENMVGHKLGEFAPTRLFRGHGGKKVDKRGKMK</sequence>
<comment type="function">
    <text evidence="1">Protein S19 forms a complex with S13 that binds strongly to the 16S ribosomal RNA.</text>
</comment>
<comment type="similarity">
    <text evidence="1">Belongs to the universal ribosomal protein uS19 family.</text>
</comment>
<evidence type="ECO:0000255" key="1">
    <source>
        <dbReference type="HAMAP-Rule" id="MF_00531"/>
    </source>
</evidence>
<evidence type="ECO:0000305" key="2"/>
<gene>
    <name evidence="1" type="primary">rpsS</name>
    <name type="ordered locus">Rcas_4022</name>
</gene>
<dbReference type="EMBL" id="CP000804">
    <property type="protein sequence ID" value="ABU60055.1"/>
    <property type="molecule type" value="Genomic_DNA"/>
</dbReference>
<dbReference type="RefSeq" id="WP_012122477.1">
    <property type="nucleotide sequence ID" value="NC_009767.1"/>
</dbReference>
<dbReference type="SMR" id="A7NR59"/>
<dbReference type="STRING" id="383372.Rcas_4022"/>
<dbReference type="KEGG" id="rca:Rcas_4022"/>
<dbReference type="eggNOG" id="COG0185">
    <property type="taxonomic scope" value="Bacteria"/>
</dbReference>
<dbReference type="HOGENOM" id="CLU_144911_0_1_0"/>
<dbReference type="OrthoDB" id="9797833at2"/>
<dbReference type="Proteomes" id="UP000000263">
    <property type="component" value="Chromosome"/>
</dbReference>
<dbReference type="GO" id="GO:0005737">
    <property type="term" value="C:cytoplasm"/>
    <property type="evidence" value="ECO:0007669"/>
    <property type="project" value="UniProtKB-ARBA"/>
</dbReference>
<dbReference type="GO" id="GO:0015935">
    <property type="term" value="C:small ribosomal subunit"/>
    <property type="evidence" value="ECO:0007669"/>
    <property type="project" value="InterPro"/>
</dbReference>
<dbReference type="GO" id="GO:0019843">
    <property type="term" value="F:rRNA binding"/>
    <property type="evidence" value="ECO:0007669"/>
    <property type="project" value="UniProtKB-UniRule"/>
</dbReference>
<dbReference type="GO" id="GO:0003735">
    <property type="term" value="F:structural constituent of ribosome"/>
    <property type="evidence" value="ECO:0007669"/>
    <property type="project" value="InterPro"/>
</dbReference>
<dbReference type="GO" id="GO:0000028">
    <property type="term" value="P:ribosomal small subunit assembly"/>
    <property type="evidence" value="ECO:0007669"/>
    <property type="project" value="TreeGrafter"/>
</dbReference>
<dbReference type="GO" id="GO:0006412">
    <property type="term" value="P:translation"/>
    <property type="evidence" value="ECO:0007669"/>
    <property type="project" value="UniProtKB-UniRule"/>
</dbReference>
<dbReference type="FunFam" id="3.30.860.10:FF:000001">
    <property type="entry name" value="30S ribosomal protein S19"/>
    <property type="match status" value="1"/>
</dbReference>
<dbReference type="Gene3D" id="3.30.860.10">
    <property type="entry name" value="30s Ribosomal Protein S19, Chain A"/>
    <property type="match status" value="1"/>
</dbReference>
<dbReference type="HAMAP" id="MF_00531">
    <property type="entry name" value="Ribosomal_uS19"/>
    <property type="match status" value="1"/>
</dbReference>
<dbReference type="InterPro" id="IPR002222">
    <property type="entry name" value="Ribosomal_uS19"/>
</dbReference>
<dbReference type="InterPro" id="IPR005732">
    <property type="entry name" value="Ribosomal_uS19_bac-type"/>
</dbReference>
<dbReference type="InterPro" id="IPR020934">
    <property type="entry name" value="Ribosomal_uS19_CS"/>
</dbReference>
<dbReference type="InterPro" id="IPR023575">
    <property type="entry name" value="Ribosomal_uS19_SF"/>
</dbReference>
<dbReference type="NCBIfam" id="TIGR01050">
    <property type="entry name" value="rpsS_bact"/>
    <property type="match status" value="1"/>
</dbReference>
<dbReference type="PANTHER" id="PTHR11880">
    <property type="entry name" value="RIBOSOMAL PROTEIN S19P FAMILY MEMBER"/>
    <property type="match status" value="1"/>
</dbReference>
<dbReference type="PANTHER" id="PTHR11880:SF8">
    <property type="entry name" value="SMALL RIBOSOMAL SUBUNIT PROTEIN US19M"/>
    <property type="match status" value="1"/>
</dbReference>
<dbReference type="Pfam" id="PF00203">
    <property type="entry name" value="Ribosomal_S19"/>
    <property type="match status" value="1"/>
</dbReference>
<dbReference type="PIRSF" id="PIRSF002144">
    <property type="entry name" value="Ribosomal_S19"/>
    <property type="match status" value="1"/>
</dbReference>
<dbReference type="PRINTS" id="PR00975">
    <property type="entry name" value="RIBOSOMALS19"/>
</dbReference>
<dbReference type="SUPFAM" id="SSF54570">
    <property type="entry name" value="Ribosomal protein S19"/>
    <property type="match status" value="1"/>
</dbReference>
<dbReference type="PROSITE" id="PS00323">
    <property type="entry name" value="RIBOSOMAL_S19"/>
    <property type="match status" value="1"/>
</dbReference>
<accession>A7NR59</accession>
<reference key="1">
    <citation type="submission" date="2007-08" db="EMBL/GenBank/DDBJ databases">
        <title>Complete sequence of Roseiflexus castenholzii DSM 13941.</title>
        <authorList>
            <consortium name="US DOE Joint Genome Institute"/>
            <person name="Copeland A."/>
            <person name="Lucas S."/>
            <person name="Lapidus A."/>
            <person name="Barry K."/>
            <person name="Glavina del Rio T."/>
            <person name="Dalin E."/>
            <person name="Tice H."/>
            <person name="Pitluck S."/>
            <person name="Thompson L.S."/>
            <person name="Brettin T."/>
            <person name="Bruce D."/>
            <person name="Detter J.C."/>
            <person name="Han C."/>
            <person name="Tapia R."/>
            <person name="Schmutz J."/>
            <person name="Larimer F."/>
            <person name="Land M."/>
            <person name="Hauser L."/>
            <person name="Kyrpides N."/>
            <person name="Mikhailova N."/>
            <person name="Bryant D.A."/>
            <person name="Hanada S."/>
            <person name="Tsukatani Y."/>
            <person name="Richardson P."/>
        </authorList>
    </citation>
    <scope>NUCLEOTIDE SEQUENCE [LARGE SCALE GENOMIC DNA]</scope>
    <source>
        <strain>DSM 13941 / HLO8</strain>
    </source>
</reference>
<organism>
    <name type="scientific">Roseiflexus castenholzii (strain DSM 13941 / HLO8)</name>
    <dbReference type="NCBI Taxonomy" id="383372"/>
    <lineage>
        <taxon>Bacteria</taxon>
        <taxon>Bacillati</taxon>
        <taxon>Chloroflexota</taxon>
        <taxon>Chloroflexia</taxon>
        <taxon>Chloroflexales</taxon>
        <taxon>Roseiflexineae</taxon>
        <taxon>Roseiflexaceae</taxon>
        <taxon>Roseiflexus</taxon>
    </lineage>
</organism>